<organism>
    <name type="scientific">Caenorhabditis elegans</name>
    <dbReference type="NCBI Taxonomy" id="6239"/>
    <lineage>
        <taxon>Eukaryota</taxon>
        <taxon>Metazoa</taxon>
        <taxon>Ecdysozoa</taxon>
        <taxon>Nematoda</taxon>
        <taxon>Chromadorea</taxon>
        <taxon>Rhabditida</taxon>
        <taxon>Rhabditina</taxon>
        <taxon>Rhabditomorpha</taxon>
        <taxon>Rhabditoidea</taxon>
        <taxon>Rhabditidae</taxon>
        <taxon>Peloderinae</taxon>
        <taxon>Caenorhabditis</taxon>
    </lineage>
</organism>
<dbReference type="EMBL" id="M25477">
    <property type="protein sequence ID" value="AAA27991.1"/>
    <property type="molecule type" value="Genomic_DNA"/>
</dbReference>
<dbReference type="EMBL" id="FO080700">
    <property type="protein sequence ID" value="CCD65932.1"/>
    <property type="molecule type" value="Genomic_DNA"/>
</dbReference>
<dbReference type="EMBL" id="FO080700">
    <property type="protein sequence ID" value="CCD65931.1"/>
    <property type="molecule type" value="Genomic_DNA"/>
</dbReference>
<dbReference type="PIR" id="JS0167">
    <property type="entry name" value="JS0167"/>
</dbReference>
<dbReference type="PIR" id="T34507">
    <property type="entry name" value="T34507"/>
</dbReference>
<dbReference type="RefSeq" id="NP_871912.1">
    <property type="nucleotide sequence ID" value="NM_182112.3"/>
</dbReference>
<dbReference type="SMR" id="P18831"/>
<dbReference type="BioGRID" id="39560">
    <property type="interactions" value="1"/>
</dbReference>
<dbReference type="FunCoup" id="P18831">
    <property type="interactions" value="27"/>
</dbReference>
<dbReference type="STRING" id="6239.ZK1290.3a.1"/>
<dbReference type="PaxDb" id="6239-ZK1290.3a"/>
<dbReference type="PeptideAtlas" id="P18831"/>
<dbReference type="GeneID" id="174226"/>
<dbReference type="KEGG" id="cel:CELE_ZK1290.3"/>
<dbReference type="AGR" id="WB:WBGene00004398"/>
<dbReference type="CTD" id="174226"/>
<dbReference type="WormBase" id="ZK1290.3">
    <property type="protein sequence ID" value="CE29156"/>
    <property type="gene ID" value="WBGene00004398"/>
    <property type="gene designation" value="rol-8"/>
</dbReference>
<dbReference type="eggNOG" id="KOG3544">
    <property type="taxonomic scope" value="Eukaryota"/>
</dbReference>
<dbReference type="HOGENOM" id="CLU_001074_4_2_1"/>
<dbReference type="InParanoid" id="P18831"/>
<dbReference type="OMA" id="RSRDMWL"/>
<dbReference type="OrthoDB" id="5983381at2759"/>
<dbReference type="PhylomeDB" id="P18831"/>
<dbReference type="PRO" id="PR:P18831"/>
<dbReference type="Proteomes" id="UP000001940">
    <property type="component" value="Chromosome II"/>
</dbReference>
<dbReference type="Bgee" id="WBGene00004398">
    <property type="expression patterns" value="Expressed in material anatomical entity and 3 other cell types or tissues"/>
</dbReference>
<dbReference type="GO" id="GO:0005581">
    <property type="term" value="C:collagen trimer"/>
    <property type="evidence" value="ECO:0007669"/>
    <property type="project" value="UniProtKB-KW"/>
</dbReference>
<dbReference type="GO" id="GO:0042302">
    <property type="term" value="F:structural constituent of cuticle"/>
    <property type="evidence" value="ECO:0007669"/>
    <property type="project" value="UniProtKB-KW"/>
</dbReference>
<dbReference type="InterPro" id="IPR002486">
    <property type="entry name" value="Col_cuticle_N"/>
</dbReference>
<dbReference type="InterPro" id="IPR008160">
    <property type="entry name" value="Collagen"/>
</dbReference>
<dbReference type="PANTHER" id="PTHR24637">
    <property type="entry name" value="COLLAGEN"/>
    <property type="match status" value="1"/>
</dbReference>
<dbReference type="PANTHER" id="PTHR24637:SF286">
    <property type="entry name" value="CUTICLE COLLAGEN 6"/>
    <property type="match status" value="1"/>
</dbReference>
<dbReference type="Pfam" id="PF01484">
    <property type="entry name" value="Col_cuticle_N"/>
    <property type="match status" value="1"/>
</dbReference>
<dbReference type="Pfam" id="PF01391">
    <property type="entry name" value="Collagen"/>
    <property type="match status" value="2"/>
</dbReference>
<dbReference type="SMART" id="SM01088">
    <property type="entry name" value="Col_cuticle_N"/>
    <property type="match status" value="1"/>
</dbReference>
<evidence type="ECO:0000256" key="1">
    <source>
        <dbReference type="SAM" id="MobiDB-lite"/>
    </source>
</evidence>
<evidence type="ECO:0000305" key="2"/>
<evidence type="ECO:0000312" key="3">
    <source>
        <dbReference type="WormBase" id="ZK1290.3"/>
    </source>
</evidence>
<keyword id="KW-0176">Collagen</keyword>
<keyword id="KW-0193">Cuticle</keyword>
<keyword id="KW-1015">Disulfide bond</keyword>
<keyword id="KW-1185">Reference proteome</keyword>
<keyword id="KW-0677">Repeat</keyword>
<accession>P18831</accession>
<accession>Q23437</accession>
<sequence>MDVKETEEQRQMRRIAFVAVVVSTAAVIASVVTLPMLYNYVQSFQSHLMVETDYCKARSRDMWLEMTALQAGKGMGHRMKRAWLFGQWIPETSAGGGGSGNGGGNYGSGASTGGGANTAGYGGYGAAVNAEPAAVCCTCNQGAAGPPGPEGPPGNDGKDGRNGNDGKNGRDAEVLPAPASEPCIICPTGAPGPMGAMGPKGPPGPKGSPGEPPQDGKSGDDGMAGQPGPIGRPGRDGMKGAPGAAGRLIPVPGPQGAPGKPGPIGPPGPKGNPGPDGQSYQGPPGPPGDSGTPGHEGRAGPNGPAGPPGDNGEKGDCGHCPPPRTPPGY</sequence>
<proteinExistence type="inferred from homology"/>
<feature type="chain" id="PRO_0000127590" description="Cuticle collagen 6">
    <location>
        <begin position="1"/>
        <end position="329"/>
    </location>
</feature>
<feature type="region of interest" description="Triple-helical region">
    <location>
        <begin position="142"/>
        <end position="171"/>
    </location>
</feature>
<feature type="region of interest" description="Disordered" evidence="1">
    <location>
        <begin position="146"/>
        <end position="329"/>
    </location>
</feature>
<feature type="region of interest" description="Triple-helical region">
    <location>
        <begin position="189"/>
        <end position="212"/>
    </location>
</feature>
<feature type="region of interest" description="Triple-helical region">
    <location>
        <begin position="216"/>
        <end position="248"/>
    </location>
</feature>
<feature type="region of interest" description="Triple-helical region">
    <location>
        <begin position="253"/>
        <end position="279"/>
    </location>
</feature>
<feature type="region of interest" description="Triple-helical region">
    <location>
        <begin position="282"/>
        <end position="320"/>
    </location>
</feature>
<feature type="compositionally biased region" description="Basic and acidic residues" evidence="1">
    <location>
        <begin position="156"/>
        <end position="173"/>
    </location>
</feature>
<feature type="compositionally biased region" description="Low complexity" evidence="1">
    <location>
        <begin position="187"/>
        <end position="199"/>
    </location>
</feature>
<feature type="compositionally biased region" description="Pro residues" evidence="1">
    <location>
        <begin position="200"/>
        <end position="212"/>
    </location>
</feature>
<feature type="compositionally biased region" description="Pro residues" evidence="1">
    <location>
        <begin position="251"/>
        <end position="272"/>
    </location>
</feature>
<feature type="compositionally biased region" description="Low complexity" evidence="1">
    <location>
        <begin position="273"/>
        <end position="282"/>
    </location>
</feature>
<feature type="compositionally biased region" description="Pro residues" evidence="1">
    <location>
        <begin position="320"/>
        <end position="329"/>
    </location>
</feature>
<feature type="sequence conflict" description="In Ref. 1; AAA27991." evidence="2" ref="1">
    <original>A</original>
    <variation>R</variation>
    <location>
        <position position="245"/>
    </location>
</feature>
<reference key="1">
    <citation type="journal article" date="1989" name="Gene">
        <title>Sequence comparisons of developmentally regulated collagen genes of Caenorhabditis elegans.</title>
        <authorList>
            <person name="Cox G.N."/>
            <person name="Fields C."/>
            <person name="Kramer J.M."/>
            <person name="Rosenzweig B."/>
            <person name="Hirsh D."/>
        </authorList>
    </citation>
    <scope>NUCLEOTIDE SEQUENCE [GENOMIC DNA]</scope>
    <source>
        <strain>Bristol N2</strain>
    </source>
</reference>
<reference key="2">
    <citation type="journal article" date="1998" name="Science">
        <title>Genome sequence of the nematode C. elegans: a platform for investigating biology.</title>
        <authorList>
            <consortium name="The C. elegans sequencing consortium"/>
        </authorList>
    </citation>
    <scope>NUCLEOTIDE SEQUENCE [LARGE SCALE GENOMIC DNA]</scope>
    <scope>ALTERNATIVE SPLICING</scope>
    <source>
        <strain>Bristol N2</strain>
    </source>
</reference>
<gene>
    <name evidence="3" type="primary">rol-8</name>
    <name type="synonym">col-6</name>
    <name type="ORF">ZK1290.3</name>
</gene>
<protein>
    <recommendedName>
        <fullName>Cuticle collagen 6</fullName>
    </recommendedName>
    <alternativeName>
        <fullName>Protein roller-8</fullName>
    </alternativeName>
</protein>
<comment type="function">
    <text>Nematode cuticles are composed largely of collagen-like proteins. The cuticle functions both as an exoskeleton and as a barrier to protect the worm from its environment.</text>
</comment>
<comment type="subunit">
    <text>Collagen polypeptide chains are complexed within the cuticle by disulfide bonds and other types of covalent cross-links.</text>
</comment>
<comment type="similarity">
    <text evidence="2">Belongs to the cuticular collagen family.</text>
</comment>
<name>COL6_CAEEL</name>